<organism>
    <name type="scientific">Acanthamoeba polyphaga mimivirus</name>
    <name type="common">APMV</name>
    <dbReference type="NCBI Taxonomy" id="212035"/>
    <lineage>
        <taxon>Viruses</taxon>
        <taxon>Varidnaviria</taxon>
        <taxon>Bamfordvirae</taxon>
        <taxon>Nucleocytoviricota</taxon>
        <taxon>Megaviricetes</taxon>
        <taxon>Imitervirales</taxon>
        <taxon>Mimiviridae</taxon>
        <taxon>Megamimivirinae</taxon>
        <taxon>Mimivirus</taxon>
        <taxon>Mimivirus bradfordmassiliense</taxon>
    </lineage>
</organism>
<organismHost>
    <name type="scientific">Acanthamoeba polyphaga</name>
    <name type="common">Amoeba</name>
    <dbReference type="NCBI Taxonomy" id="5757"/>
</organismHost>
<feature type="chain" id="PRO_0000251100" description="Uncharacterized HTH-type transcriptional regulator R559">
    <location>
        <begin position="1"/>
        <end position="226"/>
    </location>
</feature>
<feature type="domain" description="HTH cro/C1-type" evidence="1">
    <location>
        <begin position="168"/>
        <end position="226"/>
    </location>
</feature>
<feature type="DNA-binding region" description="H-T-H motif" evidence="1">
    <location>
        <begin position="179"/>
        <end position="198"/>
    </location>
</feature>
<accession>Q5UR40</accession>
<reference key="1">
    <citation type="journal article" date="2004" name="Science">
        <title>The 1.2-megabase genome sequence of Mimivirus.</title>
        <authorList>
            <person name="Raoult D."/>
            <person name="Audic S."/>
            <person name="Robert C."/>
            <person name="Abergel C."/>
            <person name="Renesto P."/>
            <person name="Ogata H."/>
            <person name="La Scola B."/>
            <person name="Susan M."/>
            <person name="Claverie J.-M."/>
        </authorList>
    </citation>
    <scope>NUCLEOTIDE SEQUENCE [GENOMIC DNA]</scope>
    <source>
        <strain>Rowbotham-Bradford</strain>
    </source>
</reference>
<name>YR559_MIMIV</name>
<evidence type="ECO:0000255" key="1">
    <source>
        <dbReference type="PROSITE-ProRule" id="PRU00257"/>
    </source>
</evidence>
<dbReference type="EMBL" id="AY653733">
    <property type="protein sequence ID" value="AAV50823.1"/>
    <property type="molecule type" value="Genomic_DNA"/>
</dbReference>
<dbReference type="SMR" id="Q5UR40"/>
<dbReference type="KEGG" id="vg:9925194"/>
<dbReference type="OrthoDB" id="16477at10239"/>
<dbReference type="Proteomes" id="UP000001134">
    <property type="component" value="Genome"/>
</dbReference>
<dbReference type="GO" id="GO:0003677">
    <property type="term" value="F:DNA binding"/>
    <property type="evidence" value="ECO:0007669"/>
    <property type="project" value="UniProtKB-KW"/>
</dbReference>
<dbReference type="CDD" id="cd00093">
    <property type="entry name" value="HTH_XRE"/>
    <property type="match status" value="1"/>
</dbReference>
<dbReference type="Gene3D" id="1.10.260.40">
    <property type="entry name" value="lambda repressor-like DNA-binding domains"/>
    <property type="match status" value="1"/>
</dbReference>
<dbReference type="InterPro" id="IPR001387">
    <property type="entry name" value="Cro/C1-type_HTH"/>
</dbReference>
<dbReference type="InterPro" id="IPR010982">
    <property type="entry name" value="Lambda_DNA-bd_dom_sf"/>
</dbReference>
<dbReference type="Pfam" id="PF01381">
    <property type="entry name" value="HTH_3"/>
    <property type="match status" value="1"/>
</dbReference>
<dbReference type="SMART" id="SM00530">
    <property type="entry name" value="HTH_XRE"/>
    <property type="match status" value="1"/>
</dbReference>
<dbReference type="SUPFAM" id="SSF47413">
    <property type="entry name" value="lambda repressor-like DNA-binding domains"/>
    <property type="match status" value="1"/>
</dbReference>
<dbReference type="PROSITE" id="PS50943">
    <property type="entry name" value="HTH_CROC1"/>
    <property type="match status" value="1"/>
</dbReference>
<proteinExistence type="predicted"/>
<keyword id="KW-0238">DNA-binding</keyword>
<keyword id="KW-1185">Reference proteome</keyword>
<keyword id="KW-0804">Transcription</keyword>
<keyword id="KW-0805">Transcription regulation</keyword>
<gene>
    <name type="ordered locus">MIMI_R559</name>
</gene>
<protein>
    <recommendedName>
        <fullName>Uncharacterized HTH-type transcriptional regulator R559</fullName>
    </recommendedName>
</protein>
<sequence length="226" mass="26345">MKMADFVNDGINVDEIVIENQENPNIFINPFKSNPHNVTLSSFRDARIYDLQIRDRPDKYGSGWEVQRSYARKRYGRWMRTVRKNPGFENFRRQPIEVLQTVEDEFGNVYVIRKKINFRAKLPQNMVRRNDGGKNRVNFTAQSVQKGINVDDQDFRPKMFTPKMGREISALRNKLGLTQTDLGKRINVDANVIRNIETGDLVAFNVQDPMVRSLAYALGIRTIKYQ</sequence>